<organism>
    <name type="scientific">Neisseria gonorrhoeae</name>
    <dbReference type="NCBI Taxonomy" id="485"/>
    <lineage>
        <taxon>Bacteria</taxon>
        <taxon>Pseudomonadati</taxon>
        <taxon>Pseudomonadota</taxon>
        <taxon>Betaproteobacteria</taxon>
        <taxon>Neisseriales</taxon>
        <taxon>Neisseriaceae</taxon>
        <taxon>Neisseria</taxon>
    </lineage>
</organism>
<comment type="subcellular location">
    <subcellularLocation>
        <location evidence="3">Cell outer membrane</location>
        <topology evidence="1">Lipid-anchor</topology>
    </subcellularLocation>
</comment>
<comment type="similarity">
    <text evidence="3">Belongs to the MafA family.</text>
</comment>
<sequence>MRARLLIPILFSVFILSACGTLTGIPSHGGGKRFAVEQELVAASARAAVKDMDLQALHGRKVALYIATMGDQGSGSLTGGRYSIDALIRGEYINSPAVRTDYTYPRYETTAETTSGGLTGLTTSLSTLNAPALSRTQSDGSGSRSSLGLNIGGMGDYRNETLTTNPRDTAFLSHLVQTVFFLRGIDVVSPANADTDVFINIDVFGTIRNRTEMHLYNAETLKAQTKLEYFAVDRTNKKLLIKPKTNAFEAAYKENYALWMGPYKVSKGIKPTEGLMVDFSDIRPYGNHTGNSAPSVEADNSHEGYGYSDEAVRQHRQGQP</sequence>
<name>MAFA_NEIGO</name>
<proteinExistence type="inferred from homology"/>
<protein>
    <recommendedName>
        <fullName>Adhesin MafA</fullName>
    </recommendedName>
</protein>
<evidence type="ECO:0000255" key="1">
    <source>
        <dbReference type="PROSITE-ProRule" id="PRU00303"/>
    </source>
</evidence>
<evidence type="ECO:0000256" key="2">
    <source>
        <dbReference type="SAM" id="MobiDB-lite"/>
    </source>
</evidence>
<evidence type="ECO:0000305" key="3"/>
<dbReference type="EMBL" id="AF142582">
    <property type="protein sequence ID" value="AAD31038.1"/>
    <property type="molecule type" value="Genomic_DNA"/>
</dbReference>
<dbReference type="RefSeq" id="WP_003706509.1">
    <property type="nucleotide sequence ID" value="NZ_VCDH01000004.1"/>
</dbReference>
<dbReference type="GeneID" id="66754141"/>
<dbReference type="GO" id="GO:0009279">
    <property type="term" value="C:cell outer membrane"/>
    <property type="evidence" value="ECO:0007669"/>
    <property type="project" value="UniProtKB-SubCell"/>
</dbReference>
<dbReference type="GO" id="GO:0007155">
    <property type="term" value="P:cell adhesion"/>
    <property type="evidence" value="ECO:0007669"/>
    <property type="project" value="UniProtKB-KW"/>
</dbReference>
<dbReference type="PROSITE" id="PS51257">
    <property type="entry name" value="PROKAR_LIPOPROTEIN"/>
    <property type="match status" value="1"/>
</dbReference>
<feature type="signal peptide" evidence="1">
    <location>
        <begin position="1"/>
        <end position="18"/>
    </location>
</feature>
<feature type="chain" id="PRO_0000344482" description="Adhesin MafA">
    <location>
        <begin position="19"/>
        <end position="320"/>
    </location>
</feature>
<feature type="region of interest" description="Disordered" evidence="2">
    <location>
        <begin position="288"/>
        <end position="320"/>
    </location>
</feature>
<feature type="lipid moiety-binding region" description="N-palmitoyl cysteine" evidence="1">
    <location>
        <position position="19"/>
    </location>
</feature>
<feature type="lipid moiety-binding region" description="S-diacylglycerol cysteine" evidence="1">
    <location>
        <position position="19"/>
    </location>
</feature>
<gene>
    <name type="primary">mafA</name>
</gene>
<reference key="1">
    <citation type="submission" date="1999-04" db="EMBL/GenBank/DDBJ databases">
        <authorList>
            <person name="Eickernjaeger S."/>
            <person name="Meyer T.F."/>
            <person name="Fischer E."/>
            <person name="Maier J."/>
            <person name="Manning P.A."/>
            <person name="Rudel T."/>
            <person name="Scheuerpflug I."/>
            <person name="Schulz E."/>
            <person name="Schwan E.T."/>
        </authorList>
    </citation>
    <scope>NUCLEOTIDE SEQUENCE [GENOMIC DNA]</scope>
    <source>
        <strain>MS11 / V18</strain>
    </source>
</reference>
<accession>Q9X6P2</accession>
<keyword id="KW-0130">Cell adhesion</keyword>
<keyword id="KW-0998">Cell outer membrane</keyword>
<keyword id="KW-0449">Lipoprotein</keyword>
<keyword id="KW-0472">Membrane</keyword>
<keyword id="KW-0564">Palmitate</keyword>
<keyword id="KW-0732">Signal</keyword>
<keyword id="KW-0843">Virulence</keyword>